<accession>Q4FPG9</accession>
<gene>
    <name evidence="1" type="primary">pth</name>
    <name type="ordered locus">SAR11_0096</name>
</gene>
<proteinExistence type="inferred from homology"/>
<comment type="function">
    <text evidence="1">Hydrolyzes ribosome-free peptidyl-tRNAs (with 1 or more amino acids incorporated), which drop off the ribosome during protein synthesis, or as a result of ribosome stalling.</text>
</comment>
<comment type="function">
    <text evidence="1">Catalyzes the release of premature peptidyl moieties from peptidyl-tRNA molecules trapped in stalled 50S ribosomal subunits, and thus maintains levels of free tRNAs and 50S ribosomes.</text>
</comment>
<comment type="catalytic activity">
    <reaction evidence="1">
        <text>an N-acyl-L-alpha-aminoacyl-tRNA + H2O = an N-acyl-L-amino acid + a tRNA + H(+)</text>
        <dbReference type="Rhea" id="RHEA:54448"/>
        <dbReference type="Rhea" id="RHEA-COMP:10123"/>
        <dbReference type="Rhea" id="RHEA-COMP:13883"/>
        <dbReference type="ChEBI" id="CHEBI:15377"/>
        <dbReference type="ChEBI" id="CHEBI:15378"/>
        <dbReference type="ChEBI" id="CHEBI:59874"/>
        <dbReference type="ChEBI" id="CHEBI:78442"/>
        <dbReference type="ChEBI" id="CHEBI:138191"/>
        <dbReference type="EC" id="3.1.1.29"/>
    </reaction>
</comment>
<comment type="subunit">
    <text evidence="1">Monomer.</text>
</comment>
<comment type="subcellular location">
    <subcellularLocation>
        <location evidence="1">Cytoplasm</location>
    </subcellularLocation>
</comment>
<comment type="similarity">
    <text evidence="1">Belongs to the PTH family.</text>
</comment>
<name>PTH_PELUB</name>
<organism>
    <name type="scientific">Pelagibacter ubique (strain HTCC1062)</name>
    <dbReference type="NCBI Taxonomy" id="335992"/>
    <lineage>
        <taxon>Bacteria</taxon>
        <taxon>Pseudomonadati</taxon>
        <taxon>Pseudomonadota</taxon>
        <taxon>Alphaproteobacteria</taxon>
        <taxon>Candidatus Pelagibacterales</taxon>
        <taxon>Candidatus Pelagibacteraceae</taxon>
        <taxon>Candidatus Pelagibacter</taxon>
    </lineage>
</organism>
<sequence length="186" mass="20863">MLLFVGLGNPTPDSENNRHNIGFKLIDALNQKFGLSKQKPKFKGLLTTGNVEDKKVYAIKPLTFMNNSGICIRELIEYFKIDAEDVIVFHDDLDLEFGKVKAKFAGSSAGHNGIESIDKFIGKDYSRVRIGIGRPKTKADVADHVLKDFDEDEMIQLEKITKNIIDSMAILIDKKLDLFSSTVNNK</sequence>
<protein>
    <recommendedName>
        <fullName evidence="1">Peptidyl-tRNA hydrolase</fullName>
        <shortName evidence="1">Pth</shortName>
        <ecNumber evidence="1">3.1.1.29</ecNumber>
    </recommendedName>
</protein>
<feature type="chain" id="PRO_0000264071" description="Peptidyl-tRNA hydrolase">
    <location>
        <begin position="1"/>
        <end position="186"/>
    </location>
</feature>
<feature type="active site" description="Proton acceptor" evidence="1">
    <location>
        <position position="19"/>
    </location>
</feature>
<feature type="binding site" evidence="1">
    <location>
        <position position="64"/>
    </location>
    <ligand>
        <name>tRNA</name>
        <dbReference type="ChEBI" id="CHEBI:17843"/>
    </ligand>
</feature>
<feature type="binding site" evidence="1">
    <location>
        <position position="66"/>
    </location>
    <ligand>
        <name>tRNA</name>
        <dbReference type="ChEBI" id="CHEBI:17843"/>
    </ligand>
</feature>
<feature type="binding site" evidence="1">
    <location>
        <position position="112"/>
    </location>
    <ligand>
        <name>tRNA</name>
        <dbReference type="ChEBI" id="CHEBI:17843"/>
    </ligand>
</feature>
<feature type="site" description="Discriminates between blocked and unblocked aminoacyl-tRNA" evidence="1">
    <location>
        <position position="9"/>
    </location>
</feature>
<feature type="site" description="Stabilizes the basic form of H active site to accept a proton" evidence="1">
    <location>
        <position position="91"/>
    </location>
</feature>
<dbReference type="EC" id="3.1.1.29" evidence="1"/>
<dbReference type="EMBL" id="CP000084">
    <property type="protein sequence ID" value="AAZ20920.1"/>
    <property type="molecule type" value="Genomic_DNA"/>
</dbReference>
<dbReference type="RefSeq" id="WP_011281468.1">
    <property type="nucleotide sequence ID" value="NC_007205.1"/>
</dbReference>
<dbReference type="SMR" id="Q4FPG9"/>
<dbReference type="STRING" id="335992.SAR11_0096"/>
<dbReference type="GeneID" id="66294598"/>
<dbReference type="KEGG" id="pub:SAR11_0096"/>
<dbReference type="eggNOG" id="COG0193">
    <property type="taxonomic scope" value="Bacteria"/>
</dbReference>
<dbReference type="HOGENOM" id="CLU_062456_1_0_5"/>
<dbReference type="OrthoDB" id="9800507at2"/>
<dbReference type="Proteomes" id="UP000002528">
    <property type="component" value="Chromosome"/>
</dbReference>
<dbReference type="GO" id="GO:0005737">
    <property type="term" value="C:cytoplasm"/>
    <property type="evidence" value="ECO:0007669"/>
    <property type="project" value="UniProtKB-SubCell"/>
</dbReference>
<dbReference type="GO" id="GO:0004045">
    <property type="term" value="F:peptidyl-tRNA hydrolase activity"/>
    <property type="evidence" value="ECO:0007669"/>
    <property type="project" value="UniProtKB-UniRule"/>
</dbReference>
<dbReference type="GO" id="GO:0000049">
    <property type="term" value="F:tRNA binding"/>
    <property type="evidence" value="ECO:0007669"/>
    <property type="project" value="UniProtKB-UniRule"/>
</dbReference>
<dbReference type="GO" id="GO:0006515">
    <property type="term" value="P:protein quality control for misfolded or incompletely synthesized proteins"/>
    <property type="evidence" value="ECO:0007669"/>
    <property type="project" value="UniProtKB-UniRule"/>
</dbReference>
<dbReference type="GO" id="GO:0072344">
    <property type="term" value="P:rescue of stalled ribosome"/>
    <property type="evidence" value="ECO:0007669"/>
    <property type="project" value="UniProtKB-UniRule"/>
</dbReference>
<dbReference type="CDD" id="cd00462">
    <property type="entry name" value="PTH"/>
    <property type="match status" value="1"/>
</dbReference>
<dbReference type="FunFam" id="3.40.50.1470:FF:000001">
    <property type="entry name" value="Peptidyl-tRNA hydrolase"/>
    <property type="match status" value="1"/>
</dbReference>
<dbReference type="Gene3D" id="3.40.50.1470">
    <property type="entry name" value="Peptidyl-tRNA hydrolase"/>
    <property type="match status" value="1"/>
</dbReference>
<dbReference type="HAMAP" id="MF_00083">
    <property type="entry name" value="Pept_tRNA_hydro_bact"/>
    <property type="match status" value="1"/>
</dbReference>
<dbReference type="InterPro" id="IPR001328">
    <property type="entry name" value="Pept_tRNA_hydro"/>
</dbReference>
<dbReference type="InterPro" id="IPR036416">
    <property type="entry name" value="Pept_tRNA_hydro_sf"/>
</dbReference>
<dbReference type="NCBIfam" id="TIGR00447">
    <property type="entry name" value="pth"/>
    <property type="match status" value="1"/>
</dbReference>
<dbReference type="PANTHER" id="PTHR17224">
    <property type="entry name" value="PEPTIDYL-TRNA HYDROLASE"/>
    <property type="match status" value="1"/>
</dbReference>
<dbReference type="PANTHER" id="PTHR17224:SF1">
    <property type="entry name" value="PEPTIDYL-TRNA HYDROLASE"/>
    <property type="match status" value="1"/>
</dbReference>
<dbReference type="Pfam" id="PF01195">
    <property type="entry name" value="Pept_tRNA_hydro"/>
    <property type="match status" value="1"/>
</dbReference>
<dbReference type="SUPFAM" id="SSF53178">
    <property type="entry name" value="Peptidyl-tRNA hydrolase-like"/>
    <property type="match status" value="1"/>
</dbReference>
<evidence type="ECO:0000255" key="1">
    <source>
        <dbReference type="HAMAP-Rule" id="MF_00083"/>
    </source>
</evidence>
<reference key="1">
    <citation type="journal article" date="2005" name="Science">
        <title>Genome streamlining in a cosmopolitan oceanic bacterium.</title>
        <authorList>
            <person name="Giovannoni S.J."/>
            <person name="Tripp H.J."/>
            <person name="Givan S."/>
            <person name="Podar M."/>
            <person name="Vergin K.L."/>
            <person name="Baptista D."/>
            <person name="Bibbs L."/>
            <person name="Eads J."/>
            <person name="Richardson T.H."/>
            <person name="Noordewier M."/>
            <person name="Rappe M.S."/>
            <person name="Short J.M."/>
            <person name="Carrington J.C."/>
            <person name="Mathur E.J."/>
        </authorList>
    </citation>
    <scope>NUCLEOTIDE SEQUENCE [LARGE SCALE GENOMIC DNA]</scope>
    <source>
        <strain>HTCC1062</strain>
    </source>
</reference>
<keyword id="KW-0963">Cytoplasm</keyword>
<keyword id="KW-0378">Hydrolase</keyword>
<keyword id="KW-1185">Reference proteome</keyword>
<keyword id="KW-0694">RNA-binding</keyword>
<keyword id="KW-0820">tRNA-binding</keyword>